<accession>Q1AW43</accession>
<name>RECA_RUBXD</name>
<comment type="function">
    <text evidence="1">Can catalyze the hydrolysis of ATP in the presence of single-stranded DNA, the ATP-dependent uptake of single-stranded DNA by duplex DNA, and the ATP-dependent hybridization of homologous single-stranded DNAs. It interacts with LexA causing its activation and leading to its autocatalytic cleavage.</text>
</comment>
<comment type="subcellular location">
    <subcellularLocation>
        <location evidence="1">Cytoplasm</location>
    </subcellularLocation>
</comment>
<comment type="similarity">
    <text evidence="1">Belongs to the RecA family.</text>
</comment>
<dbReference type="EMBL" id="CP000386">
    <property type="protein sequence ID" value="ABG04385.1"/>
    <property type="molecule type" value="Genomic_DNA"/>
</dbReference>
<dbReference type="RefSeq" id="WP_011564402.1">
    <property type="nucleotide sequence ID" value="NC_008148.1"/>
</dbReference>
<dbReference type="SMR" id="Q1AW43"/>
<dbReference type="STRING" id="266117.Rxyl_1423"/>
<dbReference type="KEGG" id="rxy:Rxyl_1423"/>
<dbReference type="eggNOG" id="COG0468">
    <property type="taxonomic scope" value="Bacteria"/>
</dbReference>
<dbReference type="HOGENOM" id="CLU_040469_1_2_11"/>
<dbReference type="OrthoDB" id="9776733at2"/>
<dbReference type="PhylomeDB" id="Q1AW43"/>
<dbReference type="Proteomes" id="UP000006637">
    <property type="component" value="Chromosome"/>
</dbReference>
<dbReference type="GO" id="GO:0005829">
    <property type="term" value="C:cytosol"/>
    <property type="evidence" value="ECO:0007669"/>
    <property type="project" value="TreeGrafter"/>
</dbReference>
<dbReference type="GO" id="GO:0005524">
    <property type="term" value="F:ATP binding"/>
    <property type="evidence" value="ECO:0007669"/>
    <property type="project" value="UniProtKB-UniRule"/>
</dbReference>
<dbReference type="GO" id="GO:0016887">
    <property type="term" value="F:ATP hydrolysis activity"/>
    <property type="evidence" value="ECO:0007669"/>
    <property type="project" value="InterPro"/>
</dbReference>
<dbReference type="GO" id="GO:0140664">
    <property type="term" value="F:ATP-dependent DNA damage sensor activity"/>
    <property type="evidence" value="ECO:0007669"/>
    <property type="project" value="InterPro"/>
</dbReference>
<dbReference type="GO" id="GO:0003684">
    <property type="term" value="F:damaged DNA binding"/>
    <property type="evidence" value="ECO:0007669"/>
    <property type="project" value="UniProtKB-UniRule"/>
</dbReference>
<dbReference type="GO" id="GO:0003697">
    <property type="term" value="F:single-stranded DNA binding"/>
    <property type="evidence" value="ECO:0007669"/>
    <property type="project" value="UniProtKB-UniRule"/>
</dbReference>
<dbReference type="GO" id="GO:0006310">
    <property type="term" value="P:DNA recombination"/>
    <property type="evidence" value="ECO:0007669"/>
    <property type="project" value="UniProtKB-UniRule"/>
</dbReference>
<dbReference type="GO" id="GO:0006281">
    <property type="term" value="P:DNA repair"/>
    <property type="evidence" value="ECO:0007669"/>
    <property type="project" value="UniProtKB-UniRule"/>
</dbReference>
<dbReference type="GO" id="GO:0009432">
    <property type="term" value="P:SOS response"/>
    <property type="evidence" value="ECO:0007669"/>
    <property type="project" value="UniProtKB-UniRule"/>
</dbReference>
<dbReference type="CDD" id="cd00983">
    <property type="entry name" value="RecA"/>
    <property type="match status" value="1"/>
</dbReference>
<dbReference type="FunFam" id="3.40.50.300:FF:000087">
    <property type="entry name" value="Recombinase RecA"/>
    <property type="match status" value="1"/>
</dbReference>
<dbReference type="Gene3D" id="3.40.50.300">
    <property type="entry name" value="P-loop containing nucleotide triphosphate hydrolases"/>
    <property type="match status" value="1"/>
</dbReference>
<dbReference type="HAMAP" id="MF_00268">
    <property type="entry name" value="RecA"/>
    <property type="match status" value="1"/>
</dbReference>
<dbReference type="InterPro" id="IPR003593">
    <property type="entry name" value="AAA+_ATPase"/>
</dbReference>
<dbReference type="InterPro" id="IPR013765">
    <property type="entry name" value="DNA_recomb/repair_RecA"/>
</dbReference>
<dbReference type="InterPro" id="IPR020584">
    <property type="entry name" value="DNA_recomb/repair_RecA_CS"/>
</dbReference>
<dbReference type="InterPro" id="IPR027417">
    <property type="entry name" value="P-loop_NTPase"/>
</dbReference>
<dbReference type="InterPro" id="IPR049261">
    <property type="entry name" value="RecA-like_C"/>
</dbReference>
<dbReference type="InterPro" id="IPR049428">
    <property type="entry name" value="RecA-like_N"/>
</dbReference>
<dbReference type="InterPro" id="IPR020588">
    <property type="entry name" value="RecA_ATP-bd"/>
</dbReference>
<dbReference type="InterPro" id="IPR023400">
    <property type="entry name" value="RecA_C_sf"/>
</dbReference>
<dbReference type="InterPro" id="IPR020587">
    <property type="entry name" value="RecA_monomer-monomer_interface"/>
</dbReference>
<dbReference type="NCBIfam" id="TIGR02012">
    <property type="entry name" value="tigrfam_recA"/>
    <property type="match status" value="1"/>
</dbReference>
<dbReference type="PANTHER" id="PTHR45900:SF1">
    <property type="entry name" value="MITOCHONDRIAL DNA REPAIR PROTEIN RECA HOMOLOG-RELATED"/>
    <property type="match status" value="1"/>
</dbReference>
<dbReference type="PANTHER" id="PTHR45900">
    <property type="entry name" value="RECA"/>
    <property type="match status" value="1"/>
</dbReference>
<dbReference type="Pfam" id="PF00154">
    <property type="entry name" value="RecA"/>
    <property type="match status" value="1"/>
</dbReference>
<dbReference type="Pfam" id="PF21096">
    <property type="entry name" value="RecA_C"/>
    <property type="match status" value="1"/>
</dbReference>
<dbReference type="PRINTS" id="PR00142">
    <property type="entry name" value="RECA"/>
</dbReference>
<dbReference type="SMART" id="SM00382">
    <property type="entry name" value="AAA"/>
    <property type="match status" value="1"/>
</dbReference>
<dbReference type="SUPFAM" id="SSF52540">
    <property type="entry name" value="P-loop containing nucleoside triphosphate hydrolases"/>
    <property type="match status" value="1"/>
</dbReference>
<dbReference type="SUPFAM" id="SSF54752">
    <property type="entry name" value="RecA protein, C-terminal domain"/>
    <property type="match status" value="1"/>
</dbReference>
<dbReference type="PROSITE" id="PS00321">
    <property type="entry name" value="RECA_1"/>
    <property type="match status" value="1"/>
</dbReference>
<dbReference type="PROSITE" id="PS50162">
    <property type="entry name" value="RECA_2"/>
    <property type="match status" value="1"/>
</dbReference>
<dbReference type="PROSITE" id="PS50163">
    <property type="entry name" value="RECA_3"/>
    <property type="match status" value="1"/>
</dbReference>
<evidence type="ECO:0000255" key="1">
    <source>
        <dbReference type="HAMAP-Rule" id="MF_00268"/>
    </source>
</evidence>
<reference key="1">
    <citation type="submission" date="2006-06" db="EMBL/GenBank/DDBJ databases">
        <title>Complete sequence of Rubrobacter xylanophilus DSM 9941.</title>
        <authorList>
            <consortium name="US DOE Joint Genome Institute"/>
            <person name="Copeland A."/>
            <person name="Lucas S."/>
            <person name="Lapidus A."/>
            <person name="Barry K."/>
            <person name="Detter J.C."/>
            <person name="Glavina del Rio T."/>
            <person name="Hammon N."/>
            <person name="Israni S."/>
            <person name="Dalin E."/>
            <person name="Tice H."/>
            <person name="Pitluck S."/>
            <person name="Munk A.C."/>
            <person name="Brettin T."/>
            <person name="Bruce D."/>
            <person name="Han C."/>
            <person name="Tapia R."/>
            <person name="Gilna P."/>
            <person name="Schmutz J."/>
            <person name="Larimer F."/>
            <person name="Land M."/>
            <person name="Hauser L."/>
            <person name="Kyrpides N."/>
            <person name="Lykidis A."/>
            <person name="da Costa M.S."/>
            <person name="Rainey F.A."/>
            <person name="Empadinhas N."/>
            <person name="Jolivet E."/>
            <person name="Battista J.R."/>
            <person name="Richardson P."/>
        </authorList>
    </citation>
    <scope>NUCLEOTIDE SEQUENCE [LARGE SCALE GENOMIC DNA]</scope>
    <source>
        <strain>DSM 9941 / JCM 11954 / NBRC 16129 / PRD-1</strain>
    </source>
</reference>
<keyword id="KW-0067">ATP-binding</keyword>
<keyword id="KW-0963">Cytoplasm</keyword>
<keyword id="KW-0227">DNA damage</keyword>
<keyword id="KW-0233">DNA recombination</keyword>
<keyword id="KW-0234">DNA repair</keyword>
<keyword id="KW-0238">DNA-binding</keyword>
<keyword id="KW-0547">Nucleotide-binding</keyword>
<keyword id="KW-1185">Reference proteome</keyword>
<keyword id="KW-0742">SOS response</keyword>
<proteinExistence type="inferred from homology"/>
<sequence length="344" mass="37023">MALDKSKALDTAVSQIERQFGKGSIMRMGDRASQKVASISTGSLALDLALGVGGVPRGRIVEIFGPESSGKTTLALHIIAEAQRAGGLAAFIDAEHALDPTYAEAIGVDLENLYFSQPDSGEQALEIADTLVRSGALDAVVIDSVAALVPRAEIEGEMGDSHVGLQARLMSQALRKLSGSLSRSGTTAIFINQLREKIGVMFGSPETTPGGRALKFYASVRMDIRRIGALKAGNETVGNQTRVKIVKNKVAPPFKEVTFDIMYGEGISREGSLLDVGIEQGVIQKSGAWFAYGEERIGQGRENARKFLKEHPEIRDRITREVYERLGLGGEEREELEGRAEPVL</sequence>
<gene>
    <name evidence="1" type="primary">recA</name>
    <name type="ordered locus">Rxyl_1423</name>
</gene>
<feature type="chain" id="PRO_1000047987" description="Protein RecA">
    <location>
        <begin position="1"/>
        <end position="344"/>
    </location>
</feature>
<feature type="binding site" evidence="1">
    <location>
        <begin position="65"/>
        <end position="72"/>
    </location>
    <ligand>
        <name>ATP</name>
        <dbReference type="ChEBI" id="CHEBI:30616"/>
    </ligand>
</feature>
<organism>
    <name type="scientific">Rubrobacter xylanophilus (strain DSM 9941 / JCM 11954 / NBRC 16129 / PRD-1)</name>
    <dbReference type="NCBI Taxonomy" id="266117"/>
    <lineage>
        <taxon>Bacteria</taxon>
        <taxon>Bacillati</taxon>
        <taxon>Actinomycetota</taxon>
        <taxon>Rubrobacteria</taxon>
        <taxon>Rubrobacterales</taxon>
        <taxon>Rubrobacteraceae</taxon>
        <taxon>Rubrobacter</taxon>
    </lineage>
</organism>
<protein>
    <recommendedName>
        <fullName evidence="1">Protein RecA</fullName>
    </recommendedName>
    <alternativeName>
        <fullName evidence="1">Recombinase A</fullName>
    </alternativeName>
</protein>